<sequence>MGKIIGIDLGTTNSCVAIMEGNQVKVIENSEGARTTPSIIAYMDDNEVLVGAPAKRQSVTNPKNTLFAVKRLIGRRFEEKEVQKDIGLMPYAIIKADNGDAWVEAHGEKLAPPQISAEVLRKMKKTAEDYLGEPVTEAVITVPAYFNDSQRQATKDAGRIAGLEVKRIINEPTAAALAFGLDKAEKGDRKIAVYDLGGGTFDVSIIEIADVDGEMQFEVLSTNGDTFLGGEDFDQRIIDYIIGEFKKEQGVDLSKDVLALQRLKEAAEKAKIELSSSQQTEINLPYITADASGPKHLNLKITRAKLEALVEDLVERTIEPCRIAIKDAGVKVSDIDDVILVGGQTRMPKVQEKVKEFFGKEPRRDVNPDEAVAVGAAIQGQVLSGDRKDVLLLDVTPLSLGIETLGGVMTKMITKNTTIPTKHSQVYSTADDNQSAVTIKVFQGEREMAAGNKLLGEFNLEGIPPAPRGVPQIEVTFDIDANGILHVGAKDKATGKENKITIKANSGLSDAEIDQMIKDAEANAAEDHKLRELADSRNQGDALVHSTKKALTEYGDKLDAGEKEKIEAALKSLEDVLKDTSADKAAIDAKVEELGKASQKLGEKMYADMQAQQAGAAGAAGAAEGAAHAGGAQQAADDVVDAEFKEVKKD</sequence>
<name>DNAK_BURVG</name>
<feature type="chain" id="PRO_1000059526" description="Chaperone protein DnaK">
    <location>
        <begin position="1"/>
        <end position="650"/>
    </location>
</feature>
<feature type="region of interest" description="Disordered" evidence="2">
    <location>
        <begin position="613"/>
        <end position="634"/>
    </location>
</feature>
<feature type="modified residue" description="Phosphothreonine; by autocatalysis" evidence="1">
    <location>
        <position position="200"/>
    </location>
</feature>
<accession>A4JBS1</accession>
<protein>
    <recommendedName>
        <fullName evidence="1">Chaperone protein DnaK</fullName>
    </recommendedName>
    <alternativeName>
        <fullName evidence="1">HSP70</fullName>
    </alternativeName>
    <alternativeName>
        <fullName evidence="1">Heat shock 70 kDa protein</fullName>
    </alternativeName>
    <alternativeName>
        <fullName evidence="1">Heat shock protein 70</fullName>
    </alternativeName>
</protein>
<dbReference type="EMBL" id="CP000614">
    <property type="protein sequence ID" value="ABO53724.1"/>
    <property type="molecule type" value="Genomic_DNA"/>
</dbReference>
<dbReference type="SMR" id="A4JBS1"/>
<dbReference type="KEGG" id="bvi:Bcep1808_0712"/>
<dbReference type="eggNOG" id="COG0443">
    <property type="taxonomic scope" value="Bacteria"/>
</dbReference>
<dbReference type="HOGENOM" id="CLU_005965_2_1_4"/>
<dbReference type="Proteomes" id="UP000002287">
    <property type="component" value="Chromosome 1"/>
</dbReference>
<dbReference type="GO" id="GO:0005524">
    <property type="term" value="F:ATP binding"/>
    <property type="evidence" value="ECO:0007669"/>
    <property type="project" value="UniProtKB-UniRule"/>
</dbReference>
<dbReference type="GO" id="GO:0140662">
    <property type="term" value="F:ATP-dependent protein folding chaperone"/>
    <property type="evidence" value="ECO:0007669"/>
    <property type="project" value="InterPro"/>
</dbReference>
<dbReference type="GO" id="GO:0051082">
    <property type="term" value="F:unfolded protein binding"/>
    <property type="evidence" value="ECO:0007669"/>
    <property type="project" value="InterPro"/>
</dbReference>
<dbReference type="CDD" id="cd10234">
    <property type="entry name" value="ASKHA_NBD_HSP70_DnaK-like"/>
    <property type="match status" value="1"/>
</dbReference>
<dbReference type="FunFam" id="2.60.34.10:FF:000014">
    <property type="entry name" value="Chaperone protein DnaK HSP70"/>
    <property type="match status" value="1"/>
</dbReference>
<dbReference type="FunFam" id="1.20.1270.10:FF:000001">
    <property type="entry name" value="Molecular chaperone DnaK"/>
    <property type="match status" value="1"/>
</dbReference>
<dbReference type="FunFam" id="3.30.420.40:FF:000004">
    <property type="entry name" value="Molecular chaperone DnaK"/>
    <property type="match status" value="1"/>
</dbReference>
<dbReference type="FunFam" id="3.90.640.10:FF:000003">
    <property type="entry name" value="Molecular chaperone DnaK"/>
    <property type="match status" value="1"/>
</dbReference>
<dbReference type="Gene3D" id="1.20.1270.10">
    <property type="match status" value="1"/>
</dbReference>
<dbReference type="Gene3D" id="3.30.420.40">
    <property type="match status" value="2"/>
</dbReference>
<dbReference type="Gene3D" id="3.90.640.10">
    <property type="entry name" value="Actin, Chain A, domain 4"/>
    <property type="match status" value="1"/>
</dbReference>
<dbReference type="Gene3D" id="2.60.34.10">
    <property type="entry name" value="Substrate Binding Domain Of DNAk, Chain A, domain 1"/>
    <property type="match status" value="1"/>
</dbReference>
<dbReference type="HAMAP" id="MF_00332">
    <property type="entry name" value="DnaK"/>
    <property type="match status" value="1"/>
</dbReference>
<dbReference type="InterPro" id="IPR043129">
    <property type="entry name" value="ATPase_NBD"/>
</dbReference>
<dbReference type="InterPro" id="IPR012725">
    <property type="entry name" value="Chaperone_DnaK"/>
</dbReference>
<dbReference type="InterPro" id="IPR018181">
    <property type="entry name" value="Heat_shock_70_CS"/>
</dbReference>
<dbReference type="InterPro" id="IPR029048">
    <property type="entry name" value="HSP70_C_sf"/>
</dbReference>
<dbReference type="InterPro" id="IPR029047">
    <property type="entry name" value="HSP70_peptide-bd_sf"/>
</dbReference>
<dbReference type="InterPro" id="IPR013126">
    <property type="entry name" value="Hsp_70_fam"/>
</dbReference>
<dbReference type="NCBIfam" id="NF001413">
    <property type="entry name" value="PRK00290.1"/>
    <property type="match status" value="1"/>
</dbReference>
<dbReference type="NCBIfam" id="NF003520">
    <property type="entry name" value="PRK05183.1"/>
    <property type="match status" value="1"/>
</dbReference>
<dbReference type="NCBIfam" id="TIGR02350">
    <property type="entry name" value="prok_dnaK"/>
    <property type="match status" value="1"/>
</dbReference>
<dbReference type="PANTHER" id="PTHR19375">
    <property type="entry name" value="HEAT SHOCK PROTEIN 70KDA"/>
    <property type="match status" value="1"/>
</dbReference>
<dbReference type="Pfam" id="PF00012">
    <property type="entry name" value="HSP70"/>
    <property type="match status" value="1"/>
</dbReference>
<dbReference type="PRINTS" id="PR00301">
    <property type="entry name" value="HEATSHOCK70"/>
</dbReference>
<dbReference type="SUPFAM" id="SSF53067">
    <property type="entry name" value="Actin-like ATPase domain"/>
    <property type="match status" value="2"/>
</dbReference>
<dbReference type="SUPFAM" id="SSF100934">
    <property type="entry name" value="Heat shock protein 70kD (HSP70), C-terminal subdomain"/>
    <property type="match status" value="1"/>
</dbReference>
<dbReference type="SUPFAM" id="SSF100920">
    <property type="entry name" value="Heat shock protein 70kD (HSP70), peptide-binding domain"/>
    <property type="match status" value="1"/>
</dbReference>
<dbReference type="PROSITE" id="PS00297">
    <property type="entry name" value="HSP70_1"/>
    <property type="match status" value="1"/>
</dbReference>
<dbReference type="PROSITE" id="PS00329">
    <property type="entry name" value="HSP70_2"/>
    <property type="match status" value="1"/>
</dbReference>
<dbReference type="PROSITE" id="PS01036">
    <property type="entry name" value="HSP70_3"/>
    <property type="match status" value="1"/>
</dbReference>
<keyword id="KW-0067">ATP-binding</keyword>
<keyword id="KW-0143">Chaperone</keyword>
<keyword id="KW-0547">Nucleotide-binding</keyword>
<keyword id="KW-0597">Phosphoprotein</keyword>
<keyword id="KW-0346">Stress response</keyword>
<organism>
    <name type="scientific">Burkholderia vietnamiensis (strain G4 / LMG 22486)</name>
    <name type="common">Burkholderia cepacia (strain R1808)</name>
    <dbReference type="NCBI Taxonomy" id="269482"/>
    <lineage>
        <taxon>Bacteria</taxon>
        <taxon>Pseudomonadati</taxon>
        <taxon>Pseudomonadota</taxon>
        <taxon>Betaproteobacteria</taxon>
        <taxon>Burkholderiales</taxon>
        <taxon>Burkholderiaceae</taxon>
        <taxon>Burkholderia</taxon>
        <taxon>Burkholderia cepacia complex</taxon>
    </lineage>
</organism>
<gene>
    <name evidence="1" type="primary">dnaK</name>
    <name type="ordered locus">Bcep1808_0712</name>
</gene>
<reference key="1">
    <citation type="submission" date="2007-03" db="EMBL/GenBank/DDBJ databases">
        <title>Complete sequence of chromosome 1 of Burkholderia vietnamiensis G4.</title>
        <authorList>
            <consortium name="US DOE Joint Genome Institute"/>
            <person name="Copeland A."/>
            <person name="Lucas S."/>
            <person name="Lapidus A."/>
            <person name="Barry K."/>
            <person name="Detter J.C."/>
            <person name="Glavina del Rio T."/>
            <person name="Hammon N."/>
            <person name="Israni S."/>
            <person name="Dalin E."/>
            <person name="Tice H."/>
            <person name="Pitluck S."/>
            <person name="Chain P."/>
            <person name="Malfatti S."/>
            <person name="Shin M."/>
            <person name="Vergez L."/>
            <person name="Schmutz J."/>
            <person name="Larimer F."/>
            <person name="Land M."/>
            <person name="Hauser L."/>
            <person name="Kyrpides N."/>
            <person name="Tiedje J."/>
            <person name="Richardson P."/>
        </authorList>
    </citation>
    <scope>NUCLEOTIDE SEQUENCE [LARGE SCALE GENOMIC DNA]</scope>
    <source>
        <strain>G4 / LMG 22486</strain>
    </source>
</reference>
<proteinExistence type="inferred from homology"/>
<comment type="function">
    <text evidence="1">Acts as a chaperone.</text>
</comment>
<comment type="induction">
    <text evidence="1">By stress conditions e.g. heat shock.</text>
</comment>
<comment type="similarity">
    <text evidence="1">Belongs to the heat shock protein 70 family.</text>
</comment>
<evidence type="ECO:0000255" key="1">
    <source>
        <dbReference type="HAMAP-Rule" id="MF_00332"/>
    </source>
</evidence>
<evidence type="ECO:0000256" key="2">
    <source>
        <dbReference type="SAM" id="MobiDB-lite"/>
    </source>
</evidence>